<proteinExistence type="evidence at protein level"/>
<dbReference type="EC" id="3.1.27.-" evidence="1"/>
<dbReference type="EMBL" id="X61192">
    <property type="protein sequence ID" value="CAA43494.1"/>
    <property type="molecule type" value="Genomic_DNA"/>
</dbReference>
<dbReference type="EMBL" id="X61193">
    <property type="protein sequence ID" value="CAA43495.1"/>
    <property type="molecule type" value="mRNA"/>
</dbReference>
<dbReference type="PIR" id="I50677">
    <property type="entry name" value="I50677"/>
</dbReference>
<dbReference type="RefSeq" id="NP_990590.1">
    <property type="nucleotide sequence ID" value="NM_205259.2"/>
</dbReference>
<dbReference type="PDB" id="4PER">
    <property type="method" value="X-ray"/>
    <property type="resolution" value="1.92 A"/>
    <property type="chains" value="B=25-137"/>
</dbReference>
<dbReference type="PDBsum" id="4PER"/>
<dbReference type="SMR" id="P27043"/>
<dbReference type="FunCoup" id="P27043">
    <property type="interactions" value="27"/>
</dbReference>
<dbReference type="STRING" id="9031.ENSGALP00000040224"/>
<dbReference type="PaxDb" id="9031-ENSGALP00000040224"/>
<dbReference type="Ensembl" id="ENSGALT00010027349.1">
    <property type="protein sequence ID" value="ENSGALP00010015603.1"/>
    <property type="gene ID" value="ENSGALG00010011433.1"/>
</dbReference>
<dbReference type="Ensembl" id="ENSGALT00010027351.1">
    <property type="protein sequence ID" value="ENSGALP00010015605.1"/>
    <property type="gene ID" value="ENSGALG00010011433.1"/>
</dbReference>
<dbReference type="Ensembl" id="ENSGALT00010027352.1">
    <property type="protein sequence ID" value="ENSGALP00010015606.1"/>
    <property type="gene ID" value="ENSGALG00010011433.1"/>
</dbReference>
<dbReference type="Ensembl" id="ENSGALT00010027353.1">
    <property type="protein sequence ID" value="ENSGALP00010015607.1"/>
    <property type="gene ID" value="ENSGALG00010011433.1"/>
</dbReference>
<dbReference type="Ensembl" id="ENSGALT00010027355.1">
    <property type="protein sequence ID" value="ENSGALP00010015609.1"/>
    <property type="gene ID" value="ENSGALG00010011433.1"/>
</dbReference>
<dbReference type="GeneID" id="396194"/>
<dbReference type="KEGG" id="gga:396194"/>
<dbReference type="CTD" id="6039"/>
<dbReference type="VEuPathDB" id="HostDB:geneid_396194"/>
<dbReference type="eggNOG" id="ENOG502T1FH">
    <property type="taxonomic scope" value="Eukaryota"/>
</dbReference>
<dbReference type="GeneTree" id="ENSGT00940000166697"/>
<dbReference type="HOGENOM" id="CLU_117006_3_1_1"/>
<dbReference type="InParanoid" id="P27043"/>
<dbReference type="OMA" id="NCHEGEV"/>
<dbReference type="OrthoDB" id="9115204at2759"/>
<dbReference type="PhylomeDB" id="P27043"/>
<dbReference type="TreeFam" id="TF333393"/>
<dbReference type="Reactome" id="R-GGA-418990">
    <property type="pathway name" value="Adherens junctions interactions"/>
</dbReference>
<dbReference type="Reactome" id="R-GGA-6798695">
    <property type="pathway name" value="Neutrophil degranulation"/>
</dbReference>
<dbReference type="Reactome" id="R-GGA-6803157">
    <property type="pathway name" value="Antimicrobial peptides"/>
</dbReference>
<dbReference type="EvolutionaryTrace" id="P27043"/>
<dbReference type="PRO" id="PR:P27043"/>
<dbReference type="Proteomes" id="UP000000539">
    <property type="component" value="Chromosome 6"/>
</dbReference>
<dbReference type="Bgee" id="ENSGALG00000003196">
    <property type="expression patterns" value="Expressed in spleen and 10 other cell types or tissues"/>
</dbReference>
<dbReference type="GO" id="GO:0005737">
    <property type="term" value="C:cytoplasm"/>
    <property type="evidence" value="ECO:0000314"/>
    <property type="project" value="AgBase"/>
</dbReference>
<dbReference type="GO" id="GO:0010494">
    <property type="term" value="C:cytoplasmic stress granule"/>
    <property type="evidence" value="ECO:0007669"/>
    <property type="project" value="UniProtKB-SubCell"/>
</dbReference>
<dbReference type="GO" id="GO:0030139">
    <property type="term" value="C:endocytic vesicle"/>
    <property type="evidence" value="ECO:0000250"/>
    <property type="project" value="UniProtKB"/>
</dbReference>
<dbReference type="GO" id="GO:0005615">
    <property type="term" value="C:extracellular space"/>
    <property type="evidence" value="ECO:0000250"/>
    <property type="project" value="UniProtKB"/>
</dbReference>
<dbReference type="GO" id="GO:0005730">
    <property type="term" value="C:nucleolus"/>
    <property type="evidence" value="ECO:0007669"/>
    <property type="project" value="UniProtKB-SubCell"/>
</dbReference>
<dbReference type="GO" id="GO:0005634">
    <property type="term" value="C:nucleus"/>
    <property type="evidence" value="ECO:0000250"/>
    <property type="project" value="UniProtKB"/>
</dbReference>
<dbReference type="GO" id="GO:0004519">
    <property type="term" value="F:endonuclease activity"/>
    <property type="evidence" value="ECO:0007669"/>
    <property type="project" value="UniProtKB-KW"/>
</dbReference>
<dbReference type="GO" id="GO:0003676">
    <property type="term" value="F:nucleic acid binding"/>
    <property type="evidence" value="ECO:0007669"/>
    <property type="project" value="InterPro"/>
</dbReference>
<dbReference type="GO" id="GO:0042803">
    <property type="term" value="F:protein homodimerization activity"/>
    <property type="evidence" value="ECO:0000250"/>
    <property type="project" value="UniProtKB"/>
</dbReference>
<dbReference type="GO" id="GO:0004540">
    <property type="term" value="F:RNA nuclease activity"/>
    <property type="evidence" value="ECO:0000315"/>
    <property type="project" value="AgBase"/>
</dbReference>
<dbReference type="GO" id="GO:0004549">
    <property type="term" value="F:tRNA-specific ribonuclease activity"/>
    <property type="evidence" value="ECO:0000250"/>
    <property type="project" value="UniProtKB"/>
</dbReference>
<dbReference type="GO" id="GO:0001525">
    <property type="term" value="P:angiogenesis"/>
    <property type="evidence" value="ECO:0000250"/>
    <property type="project" value="UniProtKB"/>
</dbReference>
<dbReference type="GO" id="GO:0050830">
    <property type="term" value="P:defense response to Gram-positive bacterium"/>
    <property type="evidence" value="ECO:0000318"/>
    <property type="project" value="GO_Central"/>
</dbReference>
<dbReference type="GO" id="GO:0071425">
    <property type="term" value="P:hematopoietic stem cell proliferation"/>
    <property type="evidence" value="ECO:0000250"/>
    <property type="project" value="UniProtKB"/>
</dbReference>
<dbReference type="GO" id="GO:0043066">
    <property type="term" value="P:negative regulation of apoptotic process"/>
    <property type="evidence" value="ECO:0000250"/>
    <property type="project" value="UniProtKB"/>
</dbReference>
<dbReference type="GO" id="GO:0032055">
    <property type="term" value="P:negative regulation of translation in response to stress"/>
    <property type="evidence" value="ECO:0000250"/>
    <property type="project" value="UniProtKB"/>
</dbReference>
<dbReference type="GO" id="GO:0034063">
    <property type="term" value="P:stress granule assembly"/>
    <property type="evidence" value="ECO:0000250"/>
    <property type="project" value="UniProtKB"/>
</dbReference>
<dbReference type="CDD" id="cd06265">
    <property type="entry name" value="RNase_A_canonical"/>
    <property type="match status" value="1"/>
</dbReference>
<dbReference type="FunFam" id="3.10.130.10:FF:000006">
    <property type="entry name" value="Ribonuclease homolog"/>
    <property type="match status" value="1"/>
</dbReference>
<dbReference type="Gene3D" id="3.10.130.10">
    <property type="entry name" value="Ribonuclease A-like domain"/>
    <property type="match status" value="1"/>
</dbReference>
<dbReference type="InterPro" id="IPR001427">
    <property type="entry name" value="RNaseA"/>
</dbReference>
<dbReference type="InterPro" id="IPR036816">
    <property type="entry name" value="RNaseA-like_dom_sf"/>
</dbReference>
<dbReference type="InterPro" id="IPR023411">
    <property type="entry name" value="RNaseA_AS"/>
</dbReference>
<dbReference type="InterPro" id="IPR023412">
    <property type="entry name" value="RNaseA_domain"/>
</dbReference>
<dbReference type="PANTHER" id="PTHR11437:SF10">
    <property type="entry name" value="ANGIOGENIN-RELATED"/>
    <property type="match status" value="1"/>
</dbReference>
<dbReference type="PANTHER" id="PTHR11437">
    <property type="entry name" value="RIBONUCLEASE"/>
    <property type="match status" value="1"/>
</dbReference>
<dbReference type="Pfam" id="PF00074">
    <property type="entry name" value="RnaseA"/>
    <property type="match status" value="1"/>
</dbReference>
<dbReference type="PRINTS" id="PR00794">
    <property type="entry name" value="RIBONUCLEASE"/>
</dbReference>
<dbReference type="SMART" id="SM00092">
    <property type="entry name" value="RNAse_Pc"/>
    <property type="match status" value="1"/>
</dbReference>
<dbReference type="SUPFAM" id="SSF54076">
    <property type="entry name" value="RNase A-like"/>
    <property type="match status" value="1"/>
</dbReference>
<dbReference type="PROSITE" id="PS00127">
    <property type="entry name" value="RNASE_PANCREATIC"/>
    <property type="match status" value="1"/>
</dbReference>
<sequence length="139" mass="15767">MAMSSLWWTAILLLALTVSMCYGVPTYQDFLRTHVDFPKTSFPNIAAYCNVMMVRRGINVHGRCKSLNTFVHTDPRNLNTLCINQPNRALRTTQQQLPVTDCKLIRSHPTCSYTGNQFNHRVRVGCWGGLPVHLDGTFP</sequence>
<accession>P27043</accession>
<protein>
    <recommendedName>
        <fullName>Angiogenin</fullName>
        <ecNumber evidence="1">3.1.27.-</ecNumber>
    </recommendedName>
    <alternativeName>
        <fullName>Ribonuclease A</fullName>
    </alternativeName>
</protein>
<keyword id="KW-0002">3D-structure</keyword>
<keyword id="KW-0037">Angiogenesis</keyword>
<keyword id="KW-0963">Cytoplasm</keyword>
<keyword id="KW-0217">Developmental protein</keyword>
<keyword id="KW-0221">Differentiation</keyword>
<keyword id="KW-1015">Disulfide bond</keyword>
<keyword id="KW-0255">Endonuclease</keyword>
<keyword id="KW-0378">Hydrolase</keyword>
<keyword id="KW-0540">Nuclease</keyword>
<keyword id="KW-0539">Nucleus</keyword>
<keyword id="KW-0652">Protein synthesis inhibitor</keyword>
<keyword id="KW-1185">Reference proteome</keyword>
<keyword id="KW-0964">Secreted</keyword>
<keyword id="KW-0732">Signal</keyword>
<keyword id="KW-0346">Stress response</keyword>
<name>ANGI_CHICK</name>
<comment type="function">
    <text evidence="1 2">Secreted ribonuclease that can either promote or restrict cell proliferation of target cells, depending on the context. Endocytosed in target cells via its receptor PLXNB2 and translocates to the cytoplasm or nucleus. Under stress conditions, localizes to the cytoplasm and promotes the assembly of stress granules (SGs): specifically cleaves a subset of tRNAs within anticodon loops to produce tRNA-derived stress-induced fragments (tiRNAs), resulting in translation repression and inhibition of cell proliferation (By similarity). tiRNas also prevent formation of apoptosome, thereby promoting cell survival (By similarity). Preferentially cleaves RNAs between a pyrimidine and an adenosine residue, suggesting that it cleaves the anticodon loop of tRNA(Ala) (32-UUAGCAU-38) after positions 33 and 36. Cleaves a subset of tRNAs, including tRNA(Ala), tRNA(Glu), tRNA(Gly), tRNA(Lys), tRNA(Val), tRNA(His), tRNA(Asp) and tRNA(Sec). Under growth conditions and in differentiated cells, translocates to the nucleus and stimulates ribosomal RNA (rRNA) transcription, including that containing the initiation site sequences of 45S rRNA, thereby promoting cell growth and proliferation. Angiogenin induces vascularization of normal and malignant tissues via its ability to promote rRNA transcription (By similarity).</text>
</comment>
<comment type="subunit">
    <text evidence="1">Homodimer. Interacts with RNH1; inhibiting ANG ribonuclease activity.</text>
</comment>
<comment type="subcellular location">
    <subcellularLocation>
        <location evidence="1">Secreted</location>
    </subcellularLocation>
    <subcellularLocation>
        <location evidence="1">Nucleus</location>
    </subcellularLocation>
    <subcellularLocation>
        <location evidence="1">Nucleus</location>
        <location evidence="1">Nucleolus</location>
    </subcellularLocation>
    <subcellularLocation>
        <location evidence="1">Cytoplasm</location>
        <location evidence="1">Stress granule</location>
    </subcellularLocation>
    <text evidence="1">The secreted protein is rapidly endocytosed by target cells following interaction with PLXNB2 receptor and translocated to the cytoplasm and nucleus. In the nucleus, accumulates in the nucleolus and binds to DNA.</text>
</comment>
<comment type="similarity">
    <text evidence="3">Belongs to the pancreatic ribonuclease family.</text>
</comment>
<gene>
    <name type="primary">ANG</name>
</gene>
<feature type="signal peptide" evidence="1">
    <location>
        <begin position="1"/>
        <end position="21"/>
    </location>
</feature>
<feature type="chain" id="PRO_0000030855" description="Angiogenin">
    <location>
        <begin position="22"/>
        <end position="139"/>
    </location>
</feature>
<feature type="active site" description="Proton acceptor" evidence="1">
    <location>
        <position position="34"/>
    </location>
</feature>
<feature type="active site" description="Proton donor" evidence="1">
    <location>
        <position position="133"/>
    </location>
</feature>
<feature type="binding site" evidence="1">
    <location>
        <position position="102"/>
    </location>
    <ligand>
        <name>tRNA</name>
        <dbReference type="ChEBI" id="CHEBI:17843"/>
    </ligand>
</feature>
<feature type="binding site" evidence="1">
    <location>
        <position position="122"/>
    </location>
    <ligand>
        <name>tRNA</name>
        <dbReference type="ChEBI" id="CHEBI:17843"/>
    </ligand>
</feature>
<feature type="disulfide bond" evidence="1">
    <location>
        <begin position="49"/>
        <end position="102"/>
    </location>
</feature>
<feature type="disulfide bond" evidence="1">
    <location>
        <begin position="64"/>
        <end position="111"/>
    </location>
</feature>
<feature type="disulfide bond" evidence="1">
    <location>
        <begin position="82"/>
        <end position="126"/>
    </location>
</feature>
<feature type="helix" evidence="4">
    <location>
        <begin position="27"/>
        <end position="34"/>
    </location>
</feature>
<feature type="helix" evidence="4">
    <location>
        <begin position="45"/>
        <end position="55"/>
    </location>
</feature>
<feature type="strand" evidence="4">
    <location>
        <begin position="66"/>
        <end position="71"/>
    </location>
</feature>
<feature type="helix" evidence="4">
    <location>
        <begin position="75"/>
        <end position="79"/>
    </location>
</feature>
<feature type="strand" evidence="4">
    <location>
        <begin position="90"/>
        <end position="92"/>
    </location>
</feature>
<feature type="strand" evidence="4">
    <location>
        <begin position="97"/>
        <end position="106"/>
    </location>
</feature>
<feature type="strand" evidence="4">
    <location>
        <begin position="108"/>
        <end position="110"/>
    </location>
</feature>
<feature type="strand" evidence="4">
    <location>
        <begin position="112"/>
        <end position="120"/>
    </location>
</feature>
<feature type="strand" evidence="4">
    <location>
        <begin position="123"/>
        <end position="127"/>
    </location>
</feature>
<feature type="strand" evidence="4">
    <location>
        <begin position="130"/>
        <end position="134"/>
    </location>
</feature>
<reference key="1">
    <citation type="journal article" date="1992" name="Oncogene">
        <title>Identification of genes differentially expressed in two types of v-myb-transformed avian myelomonocytic cells.</title>
        <authorList>
            <person name="Nakano T."/>
            <person name="Graf T."/>
        </authorList>
    </citation>
    <scope>NUCLEOTIDE SEQUENCE [GENOMIC DNA / MRNA]</scope>
    <source>
        <strain>White leghorn</strain>
        <tissue>Bone marrow</tissue>
    </source>
</reference>
<evidence type="ECO:0000250" key="1">
    <source>
        <dbReference type="UniProtKB" id="P03950"/>
    </source>
</evidence>
<evidence type="ECO:0000250" key="2">
    <source>
        <dbReference type="UniProtKB" id="P21570"/>
    </source>
</evidence>
<evidence type="ECO:0000305" key="3"/>
<evidence type="ECO:0007829" key="4">
    <source>
        <dbReference type="PDB" id="4PER"/>
    </source>
</evidence>
<organism>
    <name type="scientific">Gallus gallus</name>
    <name type="common">Chicken</name>
    <dbReference type="NCBI Taxonomy" id="9031"/>
    <lineage>
        <taxon>Eukaryota</taxon>
        <taxon>Metazoa</taxon>
        <taxon>Chordata</taxon>
        <taxon>Craniata</taxon>
        <taxon>Vertebrata</taxon>
        <taxon>Euteleostomi</taxon>
        <taxon>Archelosauria</taxon>
        <taxon>Archosauria</taxon>
        <taxon>Dinosauria</taxon>
        <taxon>Saurischia</taxon>
        <taxon>Theropoda</taxon>
        <taxon>Coelurosauria</taxon>
        <taxon>Aves</taxon>
        <taxon>Neognathae</taxon>
        <taxon>Galloanserae</taxon>
        <taxon>Galliformes</taxon>
        <taxon>Phasianidae</taxon>
        <taxon>Phasianinae</taxon>
        <taxon>Gallus</taxon>
    </lineage>
</organism>